<organism>
    <name type="scientific">Vibrio campbellii (strain ATCC BAA-1116)</name>
    <dbReference type="NCBI Taxonomy" id="2902295"/>
    <lineage>
        <taxon>Bacteria</taxon>
        <taxon>Pseudomonadati</taxon>
        <taxon>Pseudomonadota</taxon>
        <taxon>Gammaproteobacteria</taxon>
        <taxon>Vibrionales</taxon>
        <taxon>Vibrionaceae</taxon>
        <taxon>Vibrio</taxon>
    </lineage>
</organism>
<feature type="chain" id="PRO_1000054051" description="Uridylate kinase">
    <location>
        <begin position="1"/>
        <end position="243"/>
    </location>
</feature>
<feature type="region of interest" description="Involved in allosteric activation by GTP" evidence="1">
    <location>
        <begin position="23"/>
        <end position="28"/>
    </location>
</feature>
<feature type="binding site" evidence="1">
    <location>
        <begin position="15"/>
        <end position="18"/>
    </location>
    <ligand>
        <name>ATP</name>
        <dbReference type="ChEBI" id="CHEBI:30616"/>
    </ligand>
</feature>
<feature type="binding site" evidence="1">
    <location>
        <position position="57"/>
    </location>
    <ligand>
        <name>UMP</name>
        <dbReference type="ChEBI" id="CHEBI:57865"/>
    </ligand>
</feature>
<feature type="binding site" evidence="1">
    <location>
        <position position="58"/>
    </location>
    <ligand>
        <name>ATP</name>
        <dbReference type="ChEBI" id="CHEBI:30616"/>
    </ligand>
</feature>
<feature type="binding site" evidence="1">
    <location>
        <position position="62"/>
    </location>
    <ligand>
        <name>ATP</name>
        <dbReference type="ChEBI" id="CHEBI:30616"/>
    </ligand>
</feature>
<feature type="binding site" evidence="1">
    <location>
        <position position="77"/>
    </location>
    <ligand>
        <name>UMP</name>
        <dbReference type="ChEBI" id="CHEBI:57865"/>
    </ligand>
</feature>
<feature type="binding site" evidence="1">
    <location>
        <begin position="138"/>
        <end position="145"/>
    </location>
    <ligand>
        <name>UMP</name>
        <dbReference type="ChEBI" id="CHEBI:57865"/>
    </ligand>
</feature>
<feature type="binding site" evidence="1">
    <location>
        <position position="165"/>
    </location>
    <ligand>
        <name>ATP</name>
        <dbReference type="ChEBI" id="CHEBI:30616"/>
    </ligand>
</feature>
<feature type="binding site" evidence="1">
    <location>
        <position position="171"/>
    </location>
    <ligand>
        <name>ATP</name>
        <dbReference type="ChEBI" id="CHEBI:30616"/>
    </ligand>
</feature>
<feature type="binding site" evidence="1">
    <location>
        <position position="174"/>
    </location>
    <ligand>
        <name>ATP</name>
        <dbReference type="ChEBI" id="CHEBI:30616"/>
    </ligand>
</feature>
<reference key="1">
    <citation type="submission" date="2007-08" db="EMBL/GenBank/DDBJ databases">
        <authorList>
            <consortium name="The Vibrio harveyi Genome Sequencing Project"/>
            <person name="Bassler B."/>
            <person name="Clifton S.W."/>
            <person name="Fulton L."/>
            <person name="Delehaunty K."/>
            <person name="Fronick C."/>
            <person name="Harrison M."/>
            <person name="Markivic C."/>
            <person name="Fulton R."/>
            <person name="Tin-Wollam A.-M."/>
            <person name="Shah N."/>
            <person name="Pepin K."/>
            <person name="Nash W."/>
            <person name="Thiruvilangam P."/>
            <person name="Bhonagiri V."/>
            <person name="Waters C."/>
            <person name="Tu K.C."/>
            <person name="Irgon J."/>
            <person name="Wilson R.K."/>
        </authorList>
    </citation>
    <scope>NUCLEOTIDE SEQUENCE [LARGE SCALE GENOMIC DNA]</scope>
    <source>
        <strain>ATCC BAA-1116 / BB120</strain>
    </source>
</reference>
<sequence>MTTNPKPAYQRILLKLSGEALQGEEGFGIDPAVLDRMAQEVKELVELGVQVGVVIGGGNLFRGAGLAEAGMNRVVGDHMGMLATVMNGLAMRDALHRAYVNARVMSAIPLKGVCDDYNWADAIRELRQGRVVIFSAGTGNPFFTTDSAACLRGIEIEADVVLKATKVDGVFTADPVANPDAELYDKLSYTEVLDKELKVMDLAAFTLARDHKMPIRVFNMNKPGALRRVVMGEAEGTLINADA</sequence>
<proteinExistence type="inferred from homology"/>
<protein>
    <recommendedName>
        <fullName evidence="1">Uridylate kinase</fullName>
        <shortName evidence="1">UK</shortName>
        <ecNumber evidence="1">2.7.4.22</ecNumber>
    </recommendedName>
    <alternativeName>
        <fullName evidence="1">Uridine monophosphate kinase</fullName>
        <shortName evidence="1">UMP kinase</shortName>
        <shortName evidence="1">UMPK</shortName>
    </alternativeName>
</protein>
<comment type="function">
    <text evidence="1">Catalyzes the reversible phosphorylation of UMP to UDP.</text>
</comment>
<comment type="catalytic activity">
    <reaction evidence="1">
        <text>UMP + ATP = UDP + ADP</text>
        <dbReference type="Rhea" id="RHEA:24400"/>
        <dbReference type="ChEBI" id="CHEBI:30616"/>
        <dbReference type="ChEBI" id="CHEBI:57865"/>
        <dbReference type="ChEBI" id="CHEBI:58223"/>
        <dbReference type="ChEBI" id="CHEBI:456216"/>
        <dbReference type="EC" id="2.7.4.22"/>
    </reaction>
</comment>
<comment type="activity regulation">
    <text evidence="1">Allosterically activated by GTP. Inhibited by UTP.</text>
</comment>
<comment type="pathway">
    <text evidence="1">Pyrimidine metabolism; CTP biosynthesis via de novo pathway; UDP from UMP (UMPK route): step 1/1.</text>
</comment>
<comment type="subunit">
    <text evidence="1">Homohexamer.</text>
</comment>
<comment type="subcellular location">
    <subcellularLocation>
        <location evidence="1">Cytoplasm</location>
    </subcellularLocation>
</comment>
<comment type="similarity">
    <text evidence="1">Belongs to the UMP kinase family.</text>
</comment>
<gene>
    <name evidence="1" type="primary">pyrH</name>
    <name type="ordered locus">VIBHAR_03235</name>
</gene>
<keyword id="KW-0021">Allosteric enzyme</keyword>
<keyword id="KW-0067">ATP-binding</keyword>
<keyword id="KW-0963">Cytoplasm</keyword>
<keyword id="KW-0418">Kinase</keyword>
<keyword id="KW-0547">Nucleotide-binding</keyword>
<keyword id="KW-0665">Pyrimidine biosynthesis</keyword>
<keyword id="KW-0808">Transferase</keyword>
<evidence type="ECO:0000255" key="1">
    <source>
        <dbReference type="HAMAP-Rule" id="MF_01220"/>
    </source>
</evidence>
<name>PYRH_VIBC1</name>
<accession>A7N1X5</accession>
<dbReference type="EC" id="2.7.4.22" evidence="1"/>
<dbReference type="EMBL" id="CP000789">
    <property type="protein sequence ID" value="ABU72184.1"/>
    <property type="molecule type" value="Genomic_DNA"/>
</dbReference>
<dbReference type="RefSeq" id="WP_012128697.1">
    <property type="nucleotide sequence ID" value="NC_022269.1"/>
</dbReference>
<dbReference type="SMR" id="A7N1X5"/>
<dbReference type="KEGG" id="vha:VIBHAR_03235"/>
<dbReference type="PATRIC" id="fig|338187.25.peg.2955"/>
<dbReference type="UniPathway" id="UPA00159">
    <property type="reaction ID" value="UER00275"/>
</dbReference>
<dbReference type="Proteomes" id="UP000008152">
    <property type="component" value="Chromosome I"/>
</dbReference>
<dbReference type="GO" id="GO:0005829">
    <property type="term" value="C:cytosol"/>
    <property type="evidence" value="ECO:0007669"/>
    <property type="project" value="TreeGrafter"/>
</dbReference>
<dbReference type="GO" id="GO:0005524">
    <property type="term" value="F:ATP binding"/>
    <property type="evidence" value="ECO:0007669"/>
    <property type="project" value="UniProtKB-KW"/>
</dbReference>
<dbReference type="GO" id="GO:0033862">
    <property type="term" value="F:UMP kinase activity"/>
    <property type="evidence" value="ECO:0007669"/>
    <property type="project" value="UniProtKB-EC"/>
</dbReference>
<dbReference type="GO" id="GO:0044210">
    <property type="term" value="P:'de novo' CTP biosynthetic process"/>
    <property type="evidence" value="ECO:0007669"/>
    <property type="project" value="UniProtKB-UniRule"/>
</dbReference>
<dbReference type="GO" id="GO:0006225">
    <property type="term" value="P:UDP biosynthetic process"/>
    <property type="evidence" value="ECO:0007669"/>
    <property type="project" value="TreeGrafter"/>
</dbReference>
<dbReference type="CDD" id="cd04254">
    <property type="entry name" value="AAK_UMPK-PyrH-Ec"/>
    <property type="match status" value="1"/>
</dbReference>
<dbReference type="FunFam" id="3.40.1160.10:FF:000001">
    <property type="entry name" value="Uridylate kinase"/>
    <property type="match status" value="1"/>
</dbReference>
<dbReference type="Gene3D" id="3.40.1160.10">
    <property type="entry name" value="Acetylglutamate kinase-like"/>
    <property type="match status" value="1"/>
</dbReference>
<dbReference type="HAMAP" id="MF_01220_B">
    <property type="entry name" value="PyrH_B"/>
    <property type="match status" value="1"/>
</dbReference>
<dbReference type="InterPro" id="IPR036393">
    <property type="entry name" value="AceGlu_kinase-like_sf"/>
</dbReference>
<dbReference type="InterPro" id="IPR001048">
    <property type="entry name" value="Asp/Glu/Uridylate_kinase"/>
</dbReference>
<dbReference type="InterPro" id="IPR011817">
    <property type="entry name" value="Uridylate_kinase"/>
</dbReference>
<dbReference type="InterPro" id="IPR015963">
    <property type="entry name" value="Uridylate_kinase_bac"/>
</dbReference>
<dbReference type="NCBIfam" id="TIGR02075">
    <property type="entry name" value="pyrH_bact"/>
    <property type="match status" value="1"/>
</dbReference>
<dbReference type="PANTHER" id="PTHR42833">
    <property type="entry name" value="URIDYLATE KINASE"/>
    <property type="match status" value="1"/>
</dbReference>
<dbReference type="PANTHER" id="PTHR42833:SF4">
    <property type="entry name" value="URIDYLATE KINASE PUMPKIN, CHLOROPLASTIC"/>
    <property type="match status" value="1"/>
</dbReference>
<dbReference type="Pfam" id="PF00696">
    <property type="entry name" value="AA_kinase"/>
    <property type="match status" value="1"/>
</dbReference>
<dbReference type="PIRSF" id="PIRSF005650">
    <property type="entry name" value="Uridylate_kin"/>
    <property type="match status" value="1"/>
</dbReference>
<dbReference type="SUPFAM" id="SSF53633">
    <property type="entry name" value="Carbamate kinase-like"/>
    <property type="match status" value="1"/>
</dbReference>